<gene>
    <name evidence="1" type="primary">rplA</name>
    <name type="ordered locus">A2cp1_2362</name>
</gene>
<accession>B8JB73</accession>
<evidence type="ECO:0000255" key="1">
    <source>
        <dbReference type="HAMAP-Rule" id="MF_01318"/>
    </source>
</evidence>
<evidence type="ECO:0000305" key="2"/>
<organism>
    <name type="scientific">Anaeromyxobacter dehalogenans (strain 2CP-1 / ATCC BAA-258)</name>
    <dbReference type="NCBI Taxonomy" id="455488"/>
    <lineage>
        <taxon>Bacteria</taxon>
        <taxon>Pseudomonadati</taxon>
        <taxon>Myxococcota</taxon>
        <taxon>Myxococcia</taxon>
        <taxon>Myxococcales</taxon>
        <taxon>Cystobacterineae</taxon>
        <taxon>Anaeromyxobacteraceae</taxon>
        <taxon>Anaeromyxobacter</taxon>
    </lineage>
</organism>
<sequence length="234" mass="25070">MAHVAKKYKAAAEKVDRTKRYKLDEAMSLVKQTATKKFDETVDASINLGVDPKHADQVVRGAVVLPHGMGKTVRLAVFAKGDKAKEAQEAGADIVGAEDLAEKIQGGFMDFDKLIATPDMMGVVGRLGKILGPRGLMPNPKVGTVTMDLARAVKEQKAGKVEFRVEKAGIVHVPFGKASFDPDKLKANFSAIMEVIYKAKPQTAKGVYVKNVTLSTTMGPGIKVDLAELAAQHA</sequence>
<comment type="function">
    <text evidence="1">Binds directly to 23S rRNA. The L1 stalk is quite mobile in the ribosome, and is involved in E site tRNA release.</text>
</comment>
<comment type="function">
    <text evidence="1">Protein L1 is also a translational repressor protein, it controls the translation of the L11 operon by binding to its mRNA.</text>
</comment>
<comment type="subunit">
    <text evidence="1">Part of the 50S ribosomal subunit.</text>
</comment>
<comment type="similarity">
    <text evidence="1">Belongs to the universal ribosomal protein uL1 family.</text>
</comment>
<protein>
    <recommendedName>
        <fullName evidence="1">Large ribosomal subunit protein uL1</fullName>
    </recommendedName>
    <alternativeName>
        <fullName evidence="2">50S ribosomal protein L1</fullName>
    </alternativeName>
</protein>
<reference key="1">
    <citation type="submission" date="2009-01" db="EMBL/GenBank/DDBJ databases">
        <title>Complete sequence of Anaeromyxobacter dehalogenans 2CP-1.</title>
        <authorList>
            <person name="Lucas S."/>
            <person name="Copeland A."/>
            <person name="Lapidus A."/>
            <person name="Glavina del Rio T."/>
            <person name="Dalin E."/>
            <person name="Tice H."/>
            <person name="Bruce D."/>
            <person name="Goodwin L."/>
            <person name="Pitluck S."/>
            <person name="Saunders E."/>
            <person name="Brettin T."/>
            <person name="Detter J.C."/>
            <person name="Han C."/>
            <person name="Larimer F."/>
            <person name="Land M."/>
            <person name="Hauser L."/>
            <person name="Kyrpides N."/>
            <person name="Ovchinnikova G."/>
            <person name="Beliaev A.S."/>
            <person name="Richardson P."/>
        </authorList>
    </citation>
    <scope>NUCLEOTIDE SEQUENCE [LARGE SCALE GENOMIC DNA]</scope>
    <source>
        <strain>2CP-1 / ATCC BAA-258</strain>
    </source>
</reference>
<proteinExistence type="inferred from homology"/>
<feature type="chain" id="PRO_1000165652" description="Large ribosomal subunit protein uL1">
    <location>
        <begin position="1"/>
        <end position="234"/>
    </location>
</feature>
<dbReference type="EMBL" id="CP001359">
    <property type="protein sequence ID" value="ACL65700.1"/>
    <property type="molecule type" value="Genomic_DNA"/>
</dbReference>
<dbReference type="RefSeq" id="WP_012526298.1">
    <property type="nucleotide sequence ID" value="NC_011891.1"/>
</dbReference>
<dbReference type="SMR" id="B8JB73"/>
<dbReference type="KEGG" id="acp:A2cp1_2362"/>
<dbReference type="HOGENOM" id="CLU_062853_0_0_7"/>
<dbReference type="Proteomes" id="UP000007089">
    <property type="component" value="Chromosome"/>
</dbReference>
<dbReference type="GO" id="GO:0022625">
    <property type="term" value="C:cytosolic large ribosomal subunit"/>
    <property type="evidence" value="ECO:0007669"/>
    <property type="project" value="TreeGrafter"/>
</dbReference>
<dbReference type="GO" id="GO:0019843">
    <property type="term" value="F:rRNA binding"/>
    <property type="evidence" value="ECO:0007669"/>
    <property type="project" value="UniProtKB-UniRule"/>
</dbReference>
<dbReference type="GO" id="GO:0003735">
    <property type="term" value="F:structural constituent of ribosome"/>
    <property type="evidence" value="ECO:0007669"/>
    <property type="project" value="InterPro"/>
</dbReference>
<dbReference type="GO" id="GO:0000049">
    <property type="term" value="F:tRNA binding"/>
    <property type="evidence" value="ECO:0007669"/>
    <property type="project" value="UniProtKB-KW"/>
</dbReference>
<dbReference type="GO" id="GO:0006417">
    <property type="term" value="P:regulation of translation"/>
    <property type="evidence" value="ECO:0007669"/>
    <property type="project" value="UniProtKB-KW"/>
</dbReference>
<dbReference type="GO" id="GO:0006412">
    <property type="term" value="P:translation"/>
    <property type="evidence" value="ECO:0007669"/>
    <property type="project" value="UniProtKB-UniRule"/>
</dbReference>
<dbReference type="CDD" id="cd00403">
    <property type="entry name" value="Ribosomal_L1"/>
    <property type="match status" value="1"/>
</dbReference>
<dbReference type="FunFam" id="3.40.50.790:FF:000001">
    <property type="entry name" value="50S ribosomal protein L1"/>
    <property type="match status" value="1"/>
</dbReference>
<dbReference type="Gene3D" id="3.30.190.20">
    <property type="match status" value="1"/>
</dbReference>
<dbReference type="Gene3D" id="3.40.50.790">
    <property type="match status" value="1"/>
</dbReference>
<dbReference type="HAMAP" id="MF_01318_B">
    <property type="entry name" value="Ribosomal_uL1_B"/>
    <property type="match status" value="1"/>
</dbReference>
<dbReference type="InterPro" id="IPR005878">
    <property type="entry name" value="Ribosom_uL1_bac-type"/>
</dbReference>
<dbReference type="InterPro" id="IPR002143">
    <property type="entry name" value="Ribosomal_uL1"/>
</dbReference>
<dbReference type="InterPro" id="IPR023674">
    <property type="entry name" value="Ribosomal_uL1-like"/>
</dbReference>
<dbReference type="InterPro" id="IPR028364">
    <property type="entry name" value="Ribosomal_uL1/biogenesis"/>
</dbReference>
<dbReference type="InterPro" id="IPR016095">
    <property type="entry name" value="Ribosomal_uL1_3-a/b-sand"/>
</dbReference>
<dbReference type="InterPro" id="IPR023673">
    <property type="entry name" value="Ribosomal_uL1_CS"/>
</dbReference>
<dbReference type="NCBIfam" id="TIGR01169">
    <property type="entry name" value="rplA_bact"/>
    <property type="match status" value="1"/>
</dbReference>
<dbReference type="PANTHER" id="PTHR36427">
    <property type="entry name" value="54S RIBOSOMAL PROTEIN L1, MITOCHONDRIAL"/>
    <property type="match status" value="1"/>
</dbReference>
<dbReference type="PANTHER" id="PTHR36427:SF3">
    <property type="entry name" value="LARGE RIBOSOMAL SUBUNIT PROTEIN UL1M"/>
    <property type="match status" value="1"/>
</dbReference>
<dbReference type="Pfam" id="PF00687">
    <property type="entry name" value="Ribosomal_L1"/>
    <property type="match status" value="1"/>
</dbReference>
<dbReference type="PIRSF" id="PIRSF002155">
    <property type="entry name" value="Ribosomal_L1"/>
    <property type="match status" value="1"/>
</dbReference>
<dbReference type="SUPFAM" id="SSF56808">
    <property type="entry name" value="Ribosomal protein L1"/>
    <property type="match status" value="1"/>
</dbReference>
<dbReference type="PROSITE" id="PS01199">
    <property type="entry name" value="RIBOSOMAL_L1"/>
    <property type="match status" value="1"/>
</dbReference>
<keyword id="KW-0678">Repressor</keyword>
<keyword id="KW-0687">Ribonucleoprotein</keyword>
<keyword id="KW-0689">Ribosomal protein</keyword>
<keyword id="KW-0694">RNA-binding</keyword>
<keyword id="KW-0699">rRNA-binding</keyword>
<keyword id="KW-0810">Translation regulation</keyword>
<keyword id="KW-0820">tRNA-binding</keyword>
<name>RL1_ANAD2</name>